<evidence type="ECO:0000255" key="1">
    <source>
        <dbReference type="HAMAP-Rule" id="MF_00050"/>
    </source>
</evidence>
<reference key="1">
    <citation type="journal article" date="2005" name="J. Bacteriol.">
        <title>Whole-genome sequence analysis of Pseudomonas syringae pv. phaseolicola 1448A reveals divergence among pathovars in genes involved in virulence and transposition.</title>
        <authorList>
            <person name="Joardar V."/>
            <person name="Lindeberg M."/>
            <person name="Jackson R.W."/>
            <person name="Selengut J."/>
            <person name="Dodson R."/>
            <person name="Brinkac L.M."/>
            <person name="Daugherty S.C."/>
            <person name="DeBoy R.T."/>
            <person name="Durkin A.S."/>
            <person name="Gwinn Giglio M."/>
            <person name="Madupu R."/>
            <person name="Nelson W.C."/>
            <person name="Rosovitz M.J."/>
            <person name="Sullivan S.A."/>
            <person name="Crabtree J."/>
            <person name="Creasy T."/>
            <person name="Davidsen T.M."/>
            <person name="Haft D.H."/>
            <person name="Zafar N."/>
            <person name="Zhou L."/>
            <person name="Halpin R."/>
            <person name="Holley T."/>
            <person name="Khouri H.M."/>
            <person name="Feldblyum T.V."/>
            <person name="White O."/>
            <person name="Fraser C.M."/>
            <person name="Chatterjee A.K."/>
            <person name="Cartinhour S."/>
            <person name="Schneider D."/>
            <person name="Mansfield J.W."/>
            <person name="Collmer A."/>
            <person name="Buell R."/>
        </authorList>
    </citation>
    <scope>NUCLEOTIDE SEQUENCE [LARGE SCALE GENOMIC DNA]</scope>
    <source>
        <strain>1448A / Race 6</strain>
    </source>
</reference>
<keyword id="KW-0963">Cytoplasm</keyword>
<keyword id="KW-0251">Elongation factor</keyword>
<keyword id="KW-0648">Protein biosynthesis</keyword>
<dbReference type="EMBL" id="CP000058">
    <property type="protein sequence ID" value="AAZ37279.1"/>
    <property type="molecule type" value="Genomic_DNA"/>
</dbReference>
<dbReference type="RefSeq" id="WP_002554729.1">
    <property type="nucleotide sequence ID" value="NC_005773.3"/>
</dbReference>
<dbReference type="SMR" id="Q48F60"/>
<dbReference type="KEGG" id="psp:PSPPH_3839"/>
<dbReference type="eggNOG" id="COG0264">
    <property type="taxonomic scope" value="Bacteria"/>
</dbReference>
<dbReference type="HOGENOM" id="CLU_047155_0_2_6"/>
<dbReference type="Proteomes" id="UP000000551">
    <property type="component" value="Chromosome"/>
</dbReference>
<dbReference type="GO" id="GO:0005737">
    <property type="term" value="C:cytoplasm"/>
    <property type="evidence" value="ECO:0007669"/>
    <property type="project" value="UniProtKB-SubCell"/>
</dbReference>
<dbReference type="GO" id="GO:0003746">
    <property type="term" value="F:translation elongation factor activity"/>
    <property type="evidence" value="ECO:0007669"/>
    <property type="project" value="UniProtKB-UniRule"/>
</dbReference>
<dbReference type="CDD" id="cd14275">
    <property type="entry name" value="UBA_EF-Ts"/>
    <property type="match status" value="1"/>
</dbReference>
<dbReference type="FunFam" id="1.10.286.20:FF:000001">
    <property type="entry name" value="Elongation factor Ts"/>
    <property type="match status" value="1"/>
</dbReference>
<dbReference type="FunFam" id="1.10.8.10:FF:000001">
    <property type="entry name" value="Elongation factor Ts"/>
    <property type="match status" value="1"/>
</dbReference>
<dbReference type="Gene3D" id="1.10.286.20">
    <property type="match status" value="1"/>
</dbReference>
<dbReference type="Gene3D" id="1.10.8.10">
    <property type="entry name" value="DNA helicase RuvA subunit, C-terminal domain"/>
    <property type="match status" value="1"/>
</dbReference>
<dbReference type="Gene3D" id="3.30.479.20">
    <property type="entry name" value="Elongation factor Ts, dimerisation domain"/>
    <property type="match status" value="2"/>
</dbReference>
<dbReference type="HAMAP" id="MF_00050">
    <property type="entry name" value="EF_Ts"/>
    <property type="match status" value="1"/>
</dbReference>
<dbReference type="InterPro" id="IPR036402">
    <property type="entry name" value="EF-Ts_dimer_sf"/>
</dbReference>
<dbReference type="InterPro" id="IPR001816">
    <property type="entry name" value="Transl_elong_EFTs/EF1B"/>
</dbReference>
<dbReference type="InterPro" id="IPR014039">
    <property type="entry name" value="Transl_elong_EFTs/EF1B_dimer"/>
</dbReference>
<dbReference type="InterPro" id="IPR018101">
    <property type="entry name" value="Transl_elong_Ts_CS"/>
</dbReference>
<dbReference type="InterPro" id="IPR009060">
    <property type="entry name" value="UBA-like_sf"/>
</dbReference>
<dbReference type="NCBIfam" id="TIGR00116">
    <property type="entry name" value="tsf"/>
    <property type="match status" value="1"/>
</dbReference>
<dbReference type="PANTHER" id="PTHR11741">
    <property type="entry name" value="ELONGATION FACTOR TS"/>
    <property type="match status" value="1"/>
</dbReference>
<dbReference type="PANTHER" id="PTHR11741:SF0">
    <property type="entry name" value="ELONGATION FACTOR TS, MITOCHONDRIAL"/>
    <property type="match status" value="1"/>
</dbReference>
<dbReference type="Pfam" id="PF00889">
    <property type="entry name" value="EF_TS"/>
    <property type="match status" value="1"/>
</dbReference>
<dbReference type="SUPFAM" id="SSF54713">
    <property type="entry name" value="Elongation factor Ts (EF-Ts), dimerisation domain"/>
    <property type="match status" value="2"/>
</dbReference>
<dbReference type="SUPFAM" id="SSF46934">
    <property type="entry name" value="UBA-like"/>
    <property type="match status" value="1"/>
</dbReference>
<dbReference type="PROSITE" id="PS01126">
    <property type="entry name" value="EF_TS_1"/>
    <property type="match status" value="1"/>
</dbReference>
<dbReference type="PROSITE" id="PS01127">
    <property type="entry name" value="EF_TS_2"/>
    <property type="match status" value="1"/>
</dbReference>
<gene>
    <name evidence="1" type="primary">tsf</name>
    <name type="ordered locus">PSPPH_3839</name>
</gene>
<organism>
    <name type="scientific">Pseudomonas savastanoi pv. phaseolicola (strain 1448A / Race 6)</name>
    <name type="common">Pseudomonas syringae pv. phaseolicola (strain 1448A / Race 6)</name>
    <dbReference type="NCBI Taxonomy" id="264730"/>
    <lineage>
        <taxon>Bacteria</taxon>
        <taxon>Pseudomonadati</taxon>
        <taxon>Pseudomonadota</taxon>
        <taxon>Gammaproteobacteria</taxon>
        <taxon>Pseudomonadales</taxon>
        <taxon>Pseudomonadaceae</taxon>
        <taxon>Pseudomonas</taxon>
    </lineage>
</organism>
<comment type="function">
    <text evidence="1">Associates with the EF-Tu.GDP complex and induces the exchange of GDP to GTP. It remains bound to the aminoacyl-tRNA.EF-Tu.GTP complex up to the GTP hydrolysis stage on the ribosome.</text>
</comment>
<comment type="subcellular location">
    <subcellularLocation>
        <location evidence="1">Cytoplasm</location>
    </subcellularLocation>
</comment>
<comment type="similarity">
    <text evidence="1">Belongs to the EF-Ts family.</text>
</comment>
<feature type="chain" id="PRO_0000241510" description="Elongation factor Ts">
    <location>
        <begin position="1"/>
        <end position="287"/>
    </location>
</feature>
<feature type="region of interest" description="Involved in Mg(2+) ion dislocation from EF-Tu" evidence="1">
    <location>
        <begin position="80"/>
        <end position="83"/>
    </location>
</feature>
<name>EFTS_PSE14</name>
<sequence length="287" mass="30522">MAEITAALVKELRERTGEGMMDCKKALTKAGGDIEKAIDDMRASGAIKAAKKAGNVAAEGAIAIKDDGKAAVIIEVNSQTDFLALQDDFKAFVAASVEKAFADKLTDVAPLIEAQEAARLVLVGKVGENVNIRRLKRIEGDVVGTYLHGNKIGVVVTLKGGNVELAKDIAMHVAASNPEFLFPSEVSAEAIEREKNVFLQLNEDKIKGKPAEIVEKMVGGRITKFLAEASLVEQAFVKNPEVKVGDLAKKAGAEIVSFTYFKVGDGIEKPVDNFADEVAAQLAAAKQ</sequence>
<protein>
    <recommendedName>
        <fullName evidence="1">Elongation factor Ts</fullName>
        <shortName evidence="1">EF-Ts</shortName>
    </recommendedName>
</protein>
<proteinExistence type="inferred from homology"/>
<accession>Q48F60</accession>